<dbReference type="EC" id="3.5.1.88" evidence="1"/>
<dbReference type="EMBL" id="AP008226">
    <property type="protein sequence ID" value="BAD70144.1"/>
    <property type="molecule type" value="Genomic_DNA"/>
</dbReference>
<dbReference type="RefSeq" id="WP_011174028.1">
    <property type="nucleotide sequence ID" value="NC_006461.1"/>
</dbReference>
<dbReference type="RefSeq" id="YP_143587.1">
    <property type="nucleotide sequence ID" value="NC_006461.1"/>
</dbReference>
<dbReference type="SMR" id="Q5SLH2"/>
<dbReference type="EnsemblBacteria" id="BAD70144">
    <property type="protein sequence ID" value="BAD70144"/>
    <property type="gene ID" value="BAD70144"/>
</dbReference>
<dbReference type="GeneID" id="3169711"/>
<dbReference type="KEGG" id="ttj:TTHA0321"/>
<dbReference type="PATRIC" id="fig|300852.9.peg.321"/>
<dbReference type="eggNOG" id="COG0242">
    <property type="taxonomic scope" value="Bacteria"/>
</dbReference>
<dbReference type="HOGENOM" id="CLU_061901_1_2_0"/>
<dbReference type="PhylomeDB" id="Q5SLH2"/>
<dbReference type="Proteomes" id="UP000000532">
    <property type="component" value="Chromosome"/>
</dbReference>
<dbReference type="GO" id="GO:0046872">
    <property type="term" value="F:metal ion binding"/>
    <property type="evidence" value="ECO:0007669"/>
    <property type="project" value="UniProtKB-KW"/>
</dbReference>
<dbReference type="GO" id="GO:0042586">
    <property type="term" value="F:peptide deformylase activity"/>
    <property type="evidence" value="ECO:0007669"/>
    <property type="project" value="UniProtKB-UniRule"/>
</dbReference>
<dbReference type="GO" id="GO:0043686">
    <property type="term" value="P:co-translational protein modification"/>
    <property type="evidence" value="ECO:0007669"/>
    <property type="project" value="TreeGrafter"/>
</dbReference>
<dbReference type="GO" id="GO:0006412">
    <property type="term" value="P:translation"/>
    <property type="evidence" value="ECO:0007669"/>
    <property type="project" value="UniProtKB-UniRule"/>
</dbReference>
<dbReference type="CDD" id="cd00487">
    <property type="entry name" value="Pep_deformylase"/>
    <property type="match status" value="1"/>
</dbReference>
<dbReference type="Gene3D" id="3.90.45.10">
    <property type="entry name" value="Peptide deformylase"/>
    <property type="match status" value="1"/>
</dbReference>
<dbReference type="HAMAP" id="MF_00163">
    <property type="entry name" value="Pep_deformylase"/>
    <property type="match status" value="1"/>
</dbReference>
<dbReference type="InterPro" id="IPR023635">
    <property type="entry name" value="Peptide_deformylase"/>
</dbReference>
<dbReference type="InterPro" id="IPR036821">
    <property type="entry name" value="Peptide_deformylase_sf"/>
</dbReference>
<dbReference type="NCBIfam" id="TIGR00079">
    <property type="entry name" value="pept_deformyl"/>
    <property type="match status" value="1"/>
</dbReference>
<dbReference type="NCBIfam" id="NF001159">
    <property type="entry name" value="PRK00150.1-3"/>
    <property type="match status" value="1"/>
</dbReference>
<dbReference type="PANTHER" id="PTHR10458">
    <property type="entry name" value="PEPTIDE DEFORMYLASE"/>
    <property type="match status" value="1"/>
</dbReference>
<dbReference type="PANTHER" id="PTHR10458:SF22">
    <property type="entry name" value="PEPTIDE DEFORMYLASE"/>
    <property type="match status" value="1"/>
</dbReference>
<dbReference type="Pfam" id="PF01327">
    <property type="entry name" value="Pep_deformylase"/>
    <property type="match status" value="1"/>
</dbReference>
<dbReference type="PIRSF" id="PIRSF004749">
    <property type="entry name" value="Pep_def"/>
    <property type="match status" value="1"/>
</dbReference>
<dbReference type="PRINTS" id="PR01576">
    <property type="entry name" value="PDEFORMYLASE"/>
</dbReference>
<dbReference type="SUPFAM" id="SSF56420">
    <property type="entry name" value="Peptide deformylase"/>
    <property type="match status" value="1"/>
</dbReference>
<sequence length="192" mass="22092">MVYPIRLYGDPVLRRKARPVEDFSGIKRLAEDMLETMFEAKGVGLAAPQIGLSQRLFVAVEYADEPEGEEERPLRELVRRVYVVANPVITYREGLVEGTEGCLSLPGLYSEEVPRAERIRVEYQDEEGRGRVLELEGYMARVFQHEIDHLDGILFFERLPKPKREAFLEANRAELVRFQKEARALLKELSQG</sequence>
<protein>
    <recommendedName>
        <fullName evidence="1">Peptide deformylase</fullName>
        <shortName evidence="1">PDF</shortName>
        <ecNumber evidence="1">3.5.1.88</ecNumber>
    </recommendedName>
    <alternativeName>
        <fullName evidence="1">Polypeptide deformylase</fullName>
    </alternativeName>
</protein>
<name>DEF_THET8</name>
<keyword id="KW-0378">Hydrolase</keyword>
<keyword id="KW-0408">Iron</keyword>
<keyword id="KW-0479">Metal-binding</keyword>
<keyword id="KW-0648">Protein biosynthesis</keyword>
<keyword id="KW-1185">Reference proteome</keyword>
<evidence type="ECO:0000255" key="1">
    <source>
        <dbReference type="HAMAP-Rule" id="MF_00163"/>
    </source>
</evidence>
<accession>Q5SLH2</accession>
<organism>
    <name type="scientific">Thermus thermophilus (strain ATCC 27634 / DSM 579 / HB8)</name>
    <dbReference type="NCBI Taxonomy" id="300852"/>
    <lineage>
        <taxon>Bacteria</taxon>
        <taxon>Thermotogati</taxon>
        <taxon>Deinococcota</taxon>
        <taxon>Deinococci</taxon>
        <taxon>Thermales</taxon>
        <taxon>Thermaceae</taxon>
        <taxon>Thermus</taxon>
    </lineage>
</organism>
<comment type="function">
    <text evidence="1">Removes the formyl group from the N-terminal Met of newly synthesized proteins. Requires at least a dipeptide for an efficient rate of reaction. N-terminal L-methionine is a prerequisite for activity but the enzyme has broad specificity at other positions.</text>
</comment>
<comment type="catalytic activity">
    <reaction evidence="1">
        <text>N-terminal N-formyl-L-methionyl-[peptide] + H2O = N-terminal L-methionyl-[peptide] + formate</text>
        <dbReference type="Rhea" id="RHEA:24420"/>
        <dbReference type="Rhea" id="RHEA-COMP:10639"/>
        <dbReference type="Rhea" id="RHEA-COMP:10640"/>
        <dbReference type="ChEBI" id="CHEBI:15377"/>
        <dbReference type="ChEBI" id="CHEBI:15740"/>
        <dbReference type="ChEBI" id="CHEBI:49298"/>
        <dbReference type="ChEBI" id="CHEBI:64731"/>
        <dbReference type="EC" id="3.5.1.88"/>
    </reaction>
</comment>
<comment type="cofactor">
    <cofactor evidence="1">
        <name>Fe(2+)</name>
        <dbReference type="ChEBI" id="CHEBI:29033"/>
    </cofactor>
    <text evidence="1">Binds 1 Fe(2+) ion.</text>
</comment>
<comment type="similarity">
    <text evidence="1">Belongs to the polypeptide deformylase family.</text>
</comment>
<proteinExistence type="inferred from homology"/>
<reference key="1">
    <citation type="submission" date="2004-11" db="EMBL/GenBank/DDBJ databases">
        <title>Complete genome sequence of Thermus thermophilus HB8.</title>
        <authorList>
            <person name="Masui R."/>
            <person name="Kurokawa K."/>
            <person name="Nakagawa N."/>
            <person name="Tokunaga F."/>
            <person name="Koyama Y."/>
            <person name="Shibata T."/>
            <person name="Oshima T."/>
            <person name="Yokoyama S."/>
            <person name="Yasunaga T."/>
            <person name="Kuramitsu S."/>
        </authorList>
    </citation>
    <scope>NUCLEOTIDE SEQUENCE [LARGE SCALE GENOMIC DNA]</scope>
    <source>
        <strain>ATCC 27634 / DSM 579 / HB8</strain>
    </source>
</reference>
<feature type="chain" id="PRO_0000301121" description="Peptide deformylase">
    <location>
        <begin position="1"/>
        <end position="192"/>
    </location>
</feature>
<feature type="active site" evidence="1">
    <location>
        <position position="146"/>
    </location>
</feature>
<feature type="binding site" evidence="1">
    <location>
        <position position="102"/>
    </location>
    <ligand>
        <name>Fe cation</name>
        <dbReference type="ChEBI" id="CHEBI:24875"/>
    </ligand>
</feature>
<feature type="binding site" evidence="1">
    <location>
        <position position="145"/>
    </location>
    <ligand>
        <name>Fe cation</name>
        <dbReference type="ChEBI" id="CHEBI:24875"/>
    </ligand>
</feature>
<feature type="binding site" evidence="1">
    <location>
        <position position="149"/>
    </location>
    <ligand>
        <name>Fe cation</name>
        <dbReference type="ChEBI" id="CHEBI:24875"/>
    </ligand>
</feature>
<gene>
    <name evidence="1" type="primary">def</name>
    <name type="ordered locus">TTHA0321</name>
</gene>